<keyword id="KW-0067">ATP-binding</keyword>
<keyword id="KW-0227">DNA damage</keyword>
<keyword id="KW-0233">DNA recombination</keyword>
<keyword id="KW-0238">DNA-binding</keyword>
<keyword id="KW-0547">Nucleotide-binding</keyword>
<reference key="1">
    <citation type="submission" date="1999-04" db="EMBL/GenBank/DDBJ databases">
        <authorList>
            <person name="Kil Y."/>
        </authorList>
    </citation>
    <scope>NUCLEOTIDE SEQUENCE [GENOMIC DNA]</scope>
    <source>
        <strain>DSM 3822 / JCM 9188 / Z-533</strain>
    </source>
</reference>
<gene>
    <name type="primary">radA</name>
</gene>
<organism>
    <name type="scientific">Desulfurococcus amylolyticus</name>
    <dbReference type="NCBI Taxonomy" id="94694"/>
    <lineage>
        <taxon>Archaea</taxon>
        <taxon>Thermoproteota</taxon>
        <taxon>Thermoprotei</taxon>
        <taxon>Desulfurococcales</taxon>
        <taxon>Desulfurococcaceae</taxon>
        <taxon>Desulfurococcus</taxon>
    </lineage>
</organism>
<protein>
    <recommendedName>
        <fullName>DNA repair and recombination protein RadA</fullName>
    </recommendedName>
</protein>
<accession>Q9Y8J4</accession>
<name>RADA_DESAM</name>
<comment type="function">
    <text evidence="1">Involved in DNA repair and in homologous recombination. Binds and assemble on single-stranded DNA to form a nucleoprotein filament. Hydrolyzes ATP in a ssDNA-dependent manner and promotes DNA strand exchange between homologous DNA molecules (By similarity).</text>
</comment>
<comment type="similarity">
    <text evidence="3">Belongs to the eukaryotic RecA-like protein family.</text>
</comment>
<sequence>MSEEKETIKERSSGFISVRDIPGVGSSIADKLEAAGYLSAWSIVVARAEELAERTGLPVLTVQKIIENARKMLGITFKTAREVKQERSNIGKITTGSKSLDELLGGGVETKTITEFFGEYGSGKTQICHQLSVNVQLTPEKGGLNGRAVYIDTEGTFRWERIEAMARALGLDPDKVMDNIYYMRAYNSDHQIAIVDELFTFVPKNDVRLVILDSVTSHFRAEYPGREHLAERQQKLNSHLHQLMRLAEAYNVAVVVTNQVMARPDVFYGDPTTAVGGHVLAHTPGVRIQLRKSKGNKRIARVVDAPHLPEGEVVFVITEEGIRDSEEE</sequence>
<dbReference type="EMBL" id="AF145465">
    <property type="protein sequence ID" value="AAD33955.1"/>
    <property type="molecule type" value="Genomic_DNA"/>
</dbReference>
<dbReference type="SMR" id="Q9Y8J4"/>
<dbReference type="BRENDA" id="3.6.4.B7">
    <property type="organism ID" value="1916"/>
</dbReference>
<dbReference type="GO" id="GO:0005524">
    <property type="term" value="F:ATP binding"/>
    <property type="evidence" value="ECO:0007669"/>
    <property type="project" value="UniProtKB-UniRule"/>
</dbReference>
<dbReference type="GO" id="GO:0016887">
    <property type="term" value="F:ATP hydrolysis activity"/>
    <property type="evidence" value="ECO:0007669"/>
    <property type="project" value="InterPro"/>
</dbReference>
<dbReference type="GO" id="GO:0140664">
    <property type="term" value="F:ATP-dependent DNA damage sensor activity"/>
    <property type="evidence" value="ECO:0007669"/>
    <property type="project" value="InterPro"/>
</dbReference>
<dbReference type="GO" id="GO:0003684">
    <property type="term" value="F:damaged DNA binding"/>
    <property type="evidence" value="ECO:0007669"/>
    <property type="project" value="UniProtKB-UniRule"/>
</dbReference>
<dbReference type="GO" id="GO:0006310">
    <property type="term" value="P:DNA recombination"/>
    <property type="evidence" value="ECO:0007669"/>
    <property type="project" value="UniProtKB-UniRule"/>
</dbReference>
<dbReference type="GO" id="GO:0006281">
    <property type="term" value="P:DNA repair"/>
    <property type="evidence" value="ECO:0007669"/>
    <property type="project" value="UniProtKB-UniRule"/>
</dbReference>
<dbReference type="CDD" id="cd19515">
    <property type="entry name" value="archRadA"/>
    <property type="match status" value="1"/>
</dbReference>
<dbReference type="FunFam" id="3.40.50.300:FF:002052">
    <property type="entry name" value="DNA repair protein RAD51 homolog"/>
    <property type="match status" value="1"/>
</dbReference>
<dbReference type="Gene3D" id="1.10.150.20">
    <property type="entry name" value="5' to 3' exonuclease, C-terminal subdomain"/>
    <property type="match status" value="1"/>
</dbReference>
<dbReference type="Gene3D" id="3.40.50.300">
    <property type="entry name" value="P-loop containing nucleotide triphosphate hydrolases"/>
    <property type="match status" value="1"/>
</dbReference>
<dbReference type="HAMAP" id="MF_00348">
    <property type="entry name" value="RadA_arch"/>
    <property type="match status" value="1"/>
</dbReference>
<dbReference type="InterPro" id="IPR003593">
    <property type="entry name" value="AAA+_ATPase"/>
</dbReference>
<dbReference type="InterPro" id="IPR013632">
    <property type="entry name" value="DNA_recomb/repair_Rad51_C"/>
</dbReference>
<dbReference type="InterPro" id="IPR011938">
    <property type="entry name" value="DNA_recomb/repair_RadA"/>
</dbReference>
<dbReference type="InterPro" id="IPR016467">
    <property type="entry name" value="DNA_recomb/repair_RecA-like"/>
</dbReference>
<dbReference type="InterPro" id="IPR010995">
    <property type="entry name" value="DNA_repair_Rad51/TF_NusA_a-hlx"/>
</dbReference>
<dbReference type="InterPro" id="IPR027417">
    <property type="entry name" value="P-loop_NTPase"/>
</dbReference>
<dbReference type="InterPro" id="IPR020588">
    <property type="entry name" value="RecA_ATP-bd"/>
</dbReference>
<dbReference type="InterPro" id="IPR020587">
    <property type="entry name" value="RecA_monomer-monomer_interface"/>
</dbReference>
<dbReference type="NCBIfam" id="NF003301">
    <property type="entry name" value="PRK04301.1"/>
    <property type="match status" value="1"/>
</dbReference>
<dbReference type="NCBIfam" id="TIGR02236">
    <property type="entry name" value="recomb_radA"/>
    <property type="match status" value="1"/>
</dbReference>
<dbReference type="PANTHER" id="PTHR22942:SF30">
    <property type="entry name" value="MEIOTIC RECOMBINATION PROTEIN DMC1_LIM15 HOMOLOG"/>
    <property type="match status" value="1"/>
</dbReference>
<dbReference type="PANTHER" id="PTHR22942">
    <property type="entry name" value="RECA/RAD51/RADA DNA STRAND-PAIRING FAMILY MEMBER"/>
    <property type="match status" value="1"/>
</dbReference>
<dbReference type="Pfam" id="PF08423">
    <property type="entry name" value="Rad51"/>
    <property type="match status" value="1"/>
</dbReference>
<dbReference type="PIRSF" id="PIRSF005856">
    <property type="entry name" value="Rad51"/>
    <property type="match status" value="1"/>
</dbReference>
<dbReference type="SMART" id="SM00382">
    <property type="entry name" value="AAA"/>
    <property type="match status" value="1"/>
</dbReference>
<dbReference type="SUPFAM" id="SSF52540">
    <property type="entry name" value="P-loop containing nucleoside triphosphate hydrolases"/>
    <property type="match status" value="1"/>
</dbReference>
<dbReference type="SUPFAM" id="SSF47794">
    <property type="entry name" value="Rad51 N-terminal domain-like"/>
    <property type="match status" value="1"/>
</dbReference>
<dbReference type="PROSITE" id="PS50162">
    <property type="entry name" value="RECA_2"/>
    <property type="match status" value="1"/>
</dbReference>
<dbReference type="PROSITE" id="PS50163">
    <property type="entry name" value="RECA_3"/>
    <property type="match status" value="1"/>
</dbReference>
<feature type="chain" id="PRO_0000150091" description="DNA repair and recombination protein RadA">
    <location>
        <begin position="1"/>
        <end position="328"/>
    </location>
</feature>
<feature type="binding site" evidence="2">
    <location>
        <begin position="118"/>
        <end position="125"/>
    </location>
    <ligand>
        <name>ATP</name>
        <dbReference type="ChEBI" id="CHEBI:30616"/>
    </ligand>
</feature>
<proteinExistence type="inferred from homology"/>
<evidence type="ECO:0000250" key="1"/>
<evidence type="ECO:0000255" key="2"/>
<evidence type="ECO:0000305" key="3"/>